<comment type="function">
    <text evidence="2 3">Cyclic octapeptide that belongs to the MSDIN-like toxin family responsible for a large number of food poisoning cases and deaths (PubMed:28866879, PubMed:8441706). Cycloaminide B is non-toxic to mammals but shows immunosuppressive activity, probably through the inhibition of the action of interleukin-1 and interleukin-2 (PubMed:8441706).</text>
</comment>
<comment type="PTM">
    <text evidence="1 2">Processed by the macrocyclase-peptidase enzyme POPB to yield a cyclic octapeptide (PubMed:28866879). POPB first removes 10 residues from the N-terminus (By similarity). Conformational trapping of the remaining peptide forces the enzyme to release this intermediate rather than proceed to macrocyclization (By similarity). The enzyme rebinds the remaining peptide in a different conformation and catalyzes macrocyclization of the N-terminal 8 residues (PubMed:28866879).</text>
</comment>
<comment type="similarity">
    <text evidence="6">Belongs to the MSDIN fungal toxin family.</text>
</comment>
<keyword id="KW-0800">Toxin</keyword>
<proteinExistence type="evidence at protein level"/>
<organism>
    <name type="scientific">Amanita phalloides</name>
    <name type="common">Death cap</name>
    <dbReference type="NCBI Taxonomy" id="67723"/>
    <lineage>
        <taxon>Eukaryota</taxon>
        <taxon>Fungi</taxon>
        <taxon>Dikarya</taxon>
        <taxon>Basidiomycota</taxon>
        <taxon>Agaricomycotina</taxon>
        <taxon>Agaricomycetes</taxon>
        <taxon>Agaricomycetidae</taxon>
        <taxon>Agaricales</taxon>
        <taxon>Pluteineae</taxon>
        <taxon>Amanitaceae</taxon>
        <taxon>Amanita</taxon>
    </lineage>
</organism>
<accession>P0CU59</accession>
<evidence type="ECO:0000250" key="1">
    <source>
        <dbReference type="UniProtKB" id="A0A067SLB9"/>
    </source>
</evidence>
<evidence type="ECO:0000269" key="2">
    <source>
    </source>
</evidence>
<evidence type="ECO:0000269" key="3">
    <source>
    </source>
</evidence>
<evidence type="ECO:0000303" key="4">
    <source>
    </source>
</evidence>
<evidence type="ECO:0000303" key="5">
    <source>
    </source>
</evidence>
<evidence type="ECO:0000305" key="6"/>
<evidence type="ECO:0000305" key="7">
    <source>
    </source>
</evidence>
<name>CYAC_AMAPH</name>
<feature type="peptide" id="PRO_0000443781" description="Cycloamanide C" evidence="7">
    <location>
        <begin position="1"/>
        <end position="8"/>
    </location>
</feature>
<feature type="cross-link" description="Cyclopeptide (Met-Pro)" evidence="2">
    <location>
        <begin position="1"/>
        <end position="8"/>
    </location>
</feature>
<dbReference type="GO" id="GO:0090729">
    <property type="term" value="F:toxin activity"/>
    <property type="evidence" value="ECO:0007669"/>
    <property type="project" value="UniProtKB-KW"/>
</dbReference>
<protein>
    <recommendedName>
        <fullName evidence="5">Cycloamanide C</fullName>
        <shortName evidence="5">CyA C</shortName>
        <shortName evidence="4">Cyl C</shortName>
    </recommendedName>
</protein>
<sequence>MLGFLVLP</sequence>
<reference key="1">
    <citation type="journal article" date="1993" name="Peptides">
        <title>Immunosuppressive activity in the series of cycloamanide peptides from mushrooms.</title>
        <authorList>
            <person name="Wieczorek Z."/>
            <person name="Siemion I.Z."/>
            <person name="Zimecki M."/>
            <person name="Bolewska-Pedyczak E."/>
            <person name="Wieland T."/>
        </authorList>
    </citation>
    <scope>FUNCTION</scope>
</reference>
<reference key="2">
    <citation type="journal article" date="2018" name="ACS Synth. Biol.">
        <title>Versatility of prolyl oligopeptidase B in peptide macrocyclization.</title>
        <authorList>
            <person name="Sgambelluri R.M."/>
            <person name="Smith M.O."/>
            <person name="Walton J.D."/>
        </authorList>
    </citation>
    <scope>CYCLIZATION</scope>
</reference>